<keyword id="KW-1185">Reference proteome</keyword>
<reference key="1">
    <citation type="journal article" date="1996" name="DNA Res.">
        <title>A 718-kb DNA sequence of the Escherichia coli K-12 genome corresponding to the 12.7-28.0 min region on the linkage map.</title>
        <authorList>
            <person name="Oshima T."/>
            <person name="Aiba H."/>
            <person name="Baba T."/>
            <person name="Fujita K."/>
            <person name="Hayashi K."/>
            <person name="Honjo A."/>
            <person name="Ikemoto K."/>
            <person name="Inada T."/>
            <person name="Itoh T."/>
            <person name="Kajihara M."/>
            <person name="Kanai K."/>
            <person name="Kashimoto K."/>
            <person name="Kimura S."/>
            <person name="Kitagawa M."/>
            <person name="Makino K."/>
            <person name="Masuda S."/>
            <person name="Miki T."/>
            <person name="Mizobuchi K."/>
            <person name="Mori H."/>
            <person name="Motomura K."/>
            <person name="Nakamura Y."/>
            <person name="Nashimoto H."/>
            <person name="Nishio Y."/>
            <person name="Saito N."/>
            <person name="Sampei G."/>
            <person name="Seki Y."/>
            <person name="Tagami H."/>
            <person name="Takemoto K."/>
            <person name="Wada C."/>
            <person name="Yamamoto Y."/>
            <person name="Yano M."/>
            <person name="Horiuchi T."/>
        </authorList>
    </citation>
    <scope>NUCLEOTIDE SEQUENCE [LARGE SCALE GENOMIC DNA]</scope>
    <source>
        <strain>K12 / W3110 / ATCC 27325 / DSM 5911</strain>
    </source>
</reference>
<reference key="2">
    <citation type="submission" date="1997-01" db="EMBL/GenBank/DDBJ databases">
        <title>Sequence of minutes 4-25 of Escherichia coli.</title>
        <authorList>
            <person name="Chung E."/>
            <person name="Allen E."/>
            <person name="Araujo R."/>
            <person name="Aparicio A.M."/>
            <person name="Davis K."/>
            <person name="Duncan M."/>
            <person name="Federspiel N."/>
            <person name="Hyman R."/>
            <person name="Kalman S."/>
            <person name="Komp C."/>
            <person name="Kurdi O."/>
            <person name="Lew H."/>
            <person name="Lin D."/>
            <person name="Namath A."/>
            <person name="Oefner P."/>
            <person name="Roberts D."/>
            <person name="Schramm S."/>
            <person name="Davis R.W."/>
        </authorList>
    </citation>
    <scope>NUCLEOTIDE SEQUENCE [LARGE SCALE GENOMIC DNA]</scope>
    <source>
        <strain>K12 / MG1655 / ATCC 47076</strain>
    </source>
</reference>
<reference key="3">
    <citation type="journal article" date="1997" name="Science">
        <title>The complete genome sequence of Escherichia coli K-12.</title>
        <authorList>
            <person name="Blattner F.R."/>
            <person name="Plunkett G. III"/>
            <person name="Bloch C.A."/>
            <person name="Perna N.T."/>
            <person name="Burland V."/>
            <person name="Riley M."/>
            <person name="Collado-Vides J."/>
            <person name="Glasner J.D."/>
            <person name="Rode C.K."/>
            <person name="Mayhew G.F."/>
            <person name="Gregor J."/>
            <person name="Davis N.W."/>
            <person name="Kirkpatrick H.A."/>
            <person name="Goeden M.A."/>
            <person name="Rose D.J."/>
            <person name="Mau B."/>
            <person name="Shao Y."/>
        </authorList>
    </citation>
    <scope>NUCLEOTIDE SEQUENCE [LARGE SCALE GENOMIC DNA]</scope>
    <source>
        <strain>K12 / MG1655 / ATCC 47076</strain>
    </source>
</reference>
<reference key="4">
    <citation type="journal article" date="2006" name="Mol. Syst. Biol.">
        <title>Highly accurate genome sequences of Escherichia coli K-12 strains MG1655 and W3110.</title>
        <authorList>
            <person name="Hayashi K."/>
            <person name="Morooka N."/>
            <person name="Yamamoto Y."/>
            <person name="Fujita K."/>
            <person name="Isono K."/>
            <person name="Choi S."/>
            <person name="Ohtsubo E."/>
            <person name="Baba T."/>
            <person name="Wanner B.L."/>
            <person name="Mori H."/>
            <person name="Horiuchi T."/>
        </authorList>
    </citation>
    <scope>NUCLEOTIDE SEQUENCE [LARGE SCALE GENOMIC DNA]</scope>
    <source>
        <strain>K12 / W3110 / ATCC 27325 / DSM 5911</strain>
    </source>
</reference>
<reference key="5">
    <citation type="submission" date="1995-10" db="EMBL/GenBank/DDBJ databases">
        <authorList>
            <person name="Robison K."/>
            <person name="O'Keeffe T."/>
            <person name="Church G.M."/>
        </authorList>
    </citation>
    <scope>NUCLEOTIDE SEQUENCE [GENOMIC DNA] OF 1-4</scope>
    <source>
        <strain>K12 / EMG2</strain>
    </source>
</reference>
<proteinExistence type="uncertain"/>
<dbReference type="EMBL" id="U82598">
    <property type="protein sequence ID" value="AAB40826.1"/>
    <property type="molecule type" value="Genomic_DNA"/>
</dbReference>
<dbReference type="EMBL" id="U00096">
    <property type="status" value="NOT_ANNOTATED_CDS"/>
    <property type="molecule type" value="Genomic_DNA"/>
</dbReference>
<dbReference type="EMBL" id="AP009048">
    <property type="protein sequence ID" value="BAA35269.1"/>
    <property type="molecule type" value="Genomic_DNA"/>
</dbReference>
<dbReference type="EMBL" id="U38811">
    <property type="status" value="NOT_ANNOTATED_CDS"/>
    <property type="molecule type" value="Genomic_DNA"/>
</dbReference>
<dbReference type="PIR" id="H64796">
    <property type="entry name" value="H64796"/>
</dbReference>
<dbReference type="SMR" id="P0DP64"/>
<dbReference type="FunCoup" id="P0DP64">
    <property type="interactions" value="591"/>
</dbReference>
<dbReference type="KEGG" id="ecj:JW0621"/>
<dbReference type="eggNOG" id="COG0388">
    <property type="taxonomic scope" value="Bacteria"/>
</dbReference>
<dbReference type="HOGENOM" id="CLU_030130_1_2_6"/>
<dbReference type="InParanoid" id="P0DP64"/>
<dbReference type="Proteomes" id="UP000000625">
    <property type="component" value="Chromosome"/>
</dbReference>
<dbReference type="Gene3D" id="3.60.110.10">
    <property type="entry name" value="Carbon-nitrogen hydrolase"/>
    <property type="match status" value="1"/>
</dbReference>
<dbReference type="InterPro" id="IPR003010">
    <property type="entry name" value="C-N_Hydrolase"/>
</dbReference>
<dbReference type="InterPro" id="IPR036526">
    <property type="entry name" value="C-N_Hydrolase_sf"/>
</dbReference>
<dbReference type="InterPro" id="IPR001110">
    <property type="entry name" value="UPF0012_CS"/>
</dbReference>
<dbReference type="PANTHER" id="PTHR23088:SF27">
    <property type="entry name" value="DEAMINATED GLUTATHIONE AMIDASE"/>
    <property type="match status" value="1"/>
</dbReference>
<dbReference type="PANTHER" id="PTHR23088">
    <property type="entry name" value="NITRILASE-RELATED"/>
    <property type="match status" value="1"/>
</dbReference>
<dbReference type="Pfam" id="PF00795">
    <property type="entry name" value="CN_hydrolase"/>
    <property type="match status" value="1"/>
</dbReference>
<dbReference type="SUPFAM" id="SSF56317">
    <property type="entry name" value="Carbon-nitrogen hydrolase"/>
    <property type="match status" value="1"/>
</dbReference>
<dbReference type="PROSITE" id="PS50263">
    <property type="entry name" value="CN_HYDROLASE"/>
    <property type="match status" value="1"/>
</dbReference>
<dbReference type="PROSITE" id="PS01227">
    <property type="entry name" value="UPF0012"/>
    <property type="match status" value="1"/>
</dbReference>
<protein>
    <recommendedName>
        <fullName>Putative protein YbeM</fullName>
    </recommendedName>
</protein>
<name>YBEM_ECOLI</name>
<organism>
    <name type="scientific">Escherichia coli (strain K12)</name>
    <dbReference type="NCBI Taxonomy" id="83333"/>
    <lineage>
        <taxon>Bacteria</taxon>
        <taxon>Pseudomonadati</taxon>
        <taxon>Pseudomonadota</taxon>
        <taxon>Gammaproteobacteria</taxon>
        <taxon>Enterobacterales</taxon>
        <taxon>Enterobacteriaceae</taxon>
        <taxon>Escherichia</taxon>
    </lineage>
</organism>
<sequence length="187" mass="20482">MMTTILTIHVPSTPGRAWNMLVALQAGNIVARYAKLHLYDAFAIQESRRVDAGNEIAPLLEVEGMKVGLMTCYDLRFPELALAQALQGAEILVLPAAWVRGPLKEHHWSTLLAARALDTTCYMVAAGECGNKNIGQSRIIDPFGVTIAAASEMPALIMAEVTPERVRQVRAQLPVLNNRRFAPPQLL</sequence>
<feature type="chain" id="PRO_0000213258" description="Putative protein YbeM">
    <location>
        <begin position="1"/>
        <end position="187"/>
    </location>
</feature>
<feature type="domain" description="CN hydrolase" evidence="2">
    <location>
        <begin position="1"/>
        <end position="163"/>
    </location>
</feature>
<evidence type="ECO:0000250" key="1">
    <source>
        <dbReference type="UniProtKB" id="A0A140NCB4"/>
    </source>
</evidence>
<evidence type="ECO:0000255" key="2">
    <source>
        <dbReference type="PROSITE-ProRule" id="PRU00054"/>
    </source>
</evidence>
<evidence type="ECO:0000305" key="3"/>
<gene>
    <name type="primary">ybeM</name>
    <name type="ordered locus">b4581</name>
    <name type="ordered locus">JW0621</name>
    <name type="ORF">b0626</name>
</gene>
<comment type="function">
    <text evidence="1">Pseudogene resulting from a nucleotide deletion that introduces a premature stop codon at position 66. This is the C-terminal fragment. The intact protein (AC A0A140NCB4) hydrolyzes deaminated glutathione (dGSH, 2-oxoglutaramate) to alpha-ketoglutarate (alpha-KG) and cysteinylglycine, has less activity against alpha-ketoglutaramate (a-KGM) and no activity on glutathione or L-glutamine (By similarity). May function as a metabolite repair enzyme (By similarity).</text>
</comment>
<comment type="similarity">
    <text evidence="3">Belongs to the carbon-nitrogen hydrolase superfamily. NIT1/NIT2 family.</text>
</comment>
<comment type="caution">
    <text evidence="3">Could be the product of a pseudogene.</text>
</comment>
<accession>P0DP64</accession>
<accession>P39874</accession>
<accession>P77104</accession>
<accession>P77192</accession>